<feature type="chain" id="PRO_0000074653" description="UPF0298 protein ABC2380">
    <location>
        <begin position="1"/>
        <end position="92"/>
    </location>
</feature>
<organism>
    <name type="scientific">Shouchella clausii (strain KSM-K16)</name>
    <name type="common">Alkalihalobacillus clausii</name>
    <dbReference type="NCBI Taxonomy" id="66692"/>
    <lineage>
        <taxon>Bacteria</taxon>
        <taxon>Bacillati</taxon>
        <taxon>Bacillota</taxon>
        <taxon>Bacilli</taxon>
        <taxon>Bacillales</taxon>
        <taxon>Bacillaceae</taxon>
        <taxon>Shouchella</taxon>
    </lineage>
</organism>
<protein>
    <recommendedName>
        <fullName evidence="1">UPF0298 protein ABC2380</fullName>
    </recommendedName>
</protein>
<reference key="1">
    <citation type="submission" date="2003-10" db="EMBL/GenBank/DDBJ databases">
        <title>The complete genome sequence of the alkaliphilic Bacillus clausii KSM-K16.</title>
        <authorList>
            <person name="Takaki Y."/>
            <person name="Kageyama Y."/>
            <person name="Shimamura S."/>
            <person name="Suzuki H."/>
            <person name="Nishi S."/>
            <person name="Hatada Y."/>
            <person name="Kawai S."/>
            <person name="Ito S."/>
            <person name="Horikoshi K."/>
        </authorList>
    </citation>
    <scope>NUCLEOTIDE SEQUENCE [LARGE SCALE GENOMIC DNA]</scope>
    <source>
        <strain>KSM-K16</strain>
    </source>
</reference>
<name>Y2380_SHOC1</name>
<dbReference type="EMBL" id="AP006627">
    <property type="protein sequence ID" value="BAD64915.1"/>
    <property type="molecule type" value="Genomic_DNA"/>
</dbReference>
<dbReference type="RefSeq" id="WP_011247223.1">
    <property type="nucleotide sequence ID" value="NC_006582.1"/>
</dbReference>
<dbReference type="SMR" id="Q5WFE5"/>
<dbReference type="STRING" id="66692.ABC2380"/>
<dbReference type="KEGG" id="bcl:ABC2380"/>
<dbReference type="eggNOG" id="COG4471">
    <property type="taxonomic scope" value="Bacteria"/>
</dbReference>
<dbReference type="HOGENOM" id="CLU_159890_2_0_9"/>
<dbReference type="OrthoDB" id="2990788at2"/>
<dbReference type="Proteomes" id="UP000001168">
    <property type="component" value="Chromosome"/>
</dbReference>
<dbReference type="GO" id="GO:0005737">
    <property type="term" value="C:cytoplasm"/>
    <property type="evidence" value="ECO:0007669"/>
    <property type="project" value="UniProtKB-SubCell"/>
</dbReference>
<dbReference type="HAMAP" id="MF_01126">
    <property type="entry name" value="UPF0298"/>
    <property type="match status" value="1"/>
</dbReference>
<dbReference type="InterPro" id="IPR016979">
    <property type="entry name" value="DUF2129"/>
</dbReference>
<dbReference type="NCBIfam" id="NF002777">
    <property type="entry name" value="PRK02886.1"/>
    <property type="match status" value="1"/>
</dbReference>
<dbReference type="Pfam" id="PF09902">
    <property type="entry name" value="DUF2129"/>
    <property type="match status" value="1"/>
</dbReference>
<dbReference type="PIRSF" id="PIRSF031653">
    <property type="entry name" value="UCP031653"/>
    <property type="match status" value="1"/>
</dbReference>
<accession>Q5WFE5</accession>
<comment type="subcellular location">
    <subcellularLocation>
        <location evidence="1">Cytoplasm</location>
    </subcellularLocation>
</comment>
<comment type="similarity">
    <text evidence="1">Belongs to the UPF0298 family.</text>
</comment>
<evidence type="ECO:0000255" key="1">
    <source>
        <dbReference type="HAMAP-Rule" id="MF_01126"/>
    </source>
</evidence>
<gene>
    <name type="ordered locus">ABC2380</name>
</gene>
<sequence length="92" mass="10840">MISPNRQGIVVWLTSLKYARQLRRFGHVQYVSKKMKYVVFYCDQSKVPELVDKLSSFHFVTDVKPSMRPFINTEYEGAKPDKAKEYDYKLGI</sequence>
<keyword id="KW-0963">Cytoplasm</keyword>
<keyword id="KW-1185">Reference proteome</keyword>
<proteinExistence type="inferred from homology"/>